<proteinExistence type="inferred from homology"/>
<reference key="1">
    <citation type="submission" date="2007-11" db="EMBL/GenBank/DDBJ databases">
        <authorList>
            <consortium name="The Salmonella enterica serovar Arizonae Genome Sequencing Project"/>
            <person name="McClelland M."/>
            <person name="Sanderson E.K."/>
            <person name="Porwollik S."/>
            <person name="Spieth J."/>
            <person name="Clifton W.S."/>
            <person name="Fulton R."/>
            <person name="Chunyan W."/>
            <person name="Wollam A."/>
            <person name="Shah N."/>
            <person name="Pepin K."/>
            <person name="Bhonagiri V."/>
            <person name="Nash W."/>
            <person name="Johnson M."/>
            <person name="Thiruvilangam P."/>
            <person name="Wilson R."/>
        </authorList>
    </citation>
    <scope>NUCLEOTIDE SEQUENCE [LARGE SCALE GENOMIC DNA]</scope>
    <source>
        <strain>ATCC BAA-731 / CDC346-86 / RSK2980</strain>
    </source>
</reference>
<comment type="function">
    <text evidence="1">Catalyzes the phosphorylation of D-glycero-D-manno-heptose 7-phosphate at the C-1 position to selectively form D-glycero-beta-D-manno-heptose-1,7-bisphosphate.</text>
</comment>
<comment type="function">
    <text evidence="1">Catalyzes the ADP transfer from ATP to D-glycero-beta-D-manno-heptose 1-phosphate, yielding ADP-D-glycero-beta-D-manno-heptose.</text>
</comment>
<comment type="catalytic activity">
    <reaction evidence="1">
        <text>D-glycero-beta-D-manno-heptose 7-phosphate + ATP = D-glycero-beta-D-manno-heptose 1,7-bisphosphate + ADP + H(+)</text>
        <dbReference type="Rhea" id="RHEA:27473"/>
        <dbReference type="ChEBI" id="CHEBI:15378"/>
        <dbReference type="ChEBI" id="CHEBI:30616"/>
        <dbReference type="ChEBI" id="CHEBI:60204"/>
        <dbReference type="ChEBI" id="CHEBI:60208"/>
        <dbReference type="ChEBI" id="CHEBI:456216"/>
        <dbReference type="EC" id="2.7.1.167"/>
    </reaction>
</comment>
<comment type="catalytic activity">
    <reaction evidence="1">
        <text>D-glycero-beta-D-manno-heptose 1-phosphate + ATP + H(+) = ADP-D-glycero-beta-D-manno-heptose + diphosphate</text>
        <dbReference type="Rhea" id="RHEA:27465"/>
        <dbReference type="ChEBI" id="CHEBI:15378"/>
        <dbReference type="ChEBI" id="CHEBI:30616"/>
        <dbReference type="ChEBI" id="CHEBI:33019"/>
        <dbReference type="ChEBI" id="CHEBI:59967"/>
        <dbReference type="ChEBI" id="CHEBI:61593"/>
        <dbReference type="EC" id="2.7.7.70"/>
    </reaction>
</comment>
<comment type="pathway">
    <text evidence="1">Nucleotide-sugar biosynthesis; ADP-L-glycero-beta-D-manno-heptose biosynthesis; ADP-L-glycero-beta-D-manno-heptose from D-glycero-beta-D-manno-heptose 7-phosphate: step 1/4.</text>
</comment>
<comment type="pathway">
    <text evidence="1">Nucleotide-sugar biosynthesis; ADP-L-glycero-beta-D-manno-heptose biosynthesis; ADP-L-glycero-beta-D-manno-heptose from D-glycero-beta-D-manno-heptose 7-phosphate: step 3/4.</text>
</comment>
<comment type="subunit">
    <text evidence="1">Homodimer.</text>
</comment>
<comment type="similarity">
    <text evidence="1">In the N-terminal section; belongs to the carbohydrate kinase PfkB family.</text>
</comment>
<comment type="similarity">
    <text evidence="1">In the C-terminal section; belongs to the cytidylyltransferase family.</text>
</comment>
<accession>A9MPW3</accession>
<dbReference type="EC" id="2.7.1.167" evidence="1"/>
<dbReference type="EC" id="2.7.7.70" evidence="1"/>
<dbReference type="EMBL" id="CP000880">
    <property type="protein sequence ID" value="ABX24206.1"/>
    <property type="molecule type" value="Genomic_DNA"/>
</dbReference>
<dbReference type="SMR" id="A9MPW3"/>
<dbReference type="STRING" id="41514.SARI_04429"/>
<dbReference type="KEGG" id="ses:SARI_04429"/>
<dbReference type="HOGENOM" id="CLU_021150_2_1_6"/>
<dbReference type="UniPathway" id="UPA00356">
    <property type="reaction ID" value="UER00437"/>
</dbReference>
<dbReference type="UniPathway" id="UPA00356">
    <property type="reaction ID" value="UER00439"/>
</dbReference>
<dbReference type="Proteomes" id="UP000002084">
    <property type="component" value="Chromosome"/>
</dbReference>
<dbReference type="GO" id="GO:0005829">
    <property type="term" value="C:cytosol"/>
    <property type="evidence" value="ECO:0007669"/>
    <property type="project" value="TreeGrafter"/>
</dbReference>
<dbReference type="GO" id="GO:0005524">
    <property type="term" value="F:ATP binding"/>
    <property type="evidence" value="ECO:0007669"/>
    <property type="project" value="UniProtKB-UniRule"/>
</dbReference>
<dbReference type="GO" id="GO:0033785">
    <property type="term" value="F:heptose 7-phosphate kinase activity"/>
    <property type="evidence" value="ECO:0007669"/>
    <property type="project" value="UniProtKB-UniRule"/>
</dbReference>
<dbReference type="GO" id="GO:0033786">
    <property type="term" value="F:heptose-1-phosphate adenylyltransferase activity"/>
    <property type="evidence" value="ECO:0007669"/>
    <property type="project" value="UniProtKB-UniRule"/>
</dbReference>
<dbReference type="GO" id="GO:0016773">
    <property type="term" value="F:phosphotransferase activity, alcohol group as acceptor"/>
    <property type="evidence" value="ECO:0007669"/>
    <property type="project" value="InterPro"/>
</dbReference>
<dbReference type="GO" id="GO:0097171">
    <property type="term" value="P:ADP-L-glycero-beta-D-manno-heptose biosynthetic process"/>
    <property type="evidence" value="ECO:0007669"/>
    <property type="project" value="UniProtKB-UniPathway"/>
</dbReference>
<dbReference type="CDD" id="cd01172">
    <property type="entry name" value="RfaE_like"/>
    <property type="match status" value="1"/>
</dbReference>
<dbReference type="FunFam" id="3.40.1190.20:FF:000002">
    <property type="entry name" value="Bifunctional protein HldE"/>
    <property type="match status" value="1"/>
</dbReference>
<dbReference type="FunFam" id="3.40.50.620:FF:000028">
    <property type="entry name" value="Bifunctional protein HldE"/>
    <property type="match status" value="1"/>
</dbReference>
<dbReference type="Gene3D" id="3.40.1190.20">
    <property type="match status" value="1"/>
</dbReference>
<dbReference type="Gene3D" id="3.40.50.620">
    <property type="entry name" value="HUPs"/>
    <property type="match status" value="1"/>
</dbReference>
<dbReference type="HAMAP" id="MF_01603">
    <property type="entry name" value="HldE"/>
    <property type="match status" value="1"/>
</dbReference>
<dbReference type="InterPro" id="IPR023030">
    <property type="entry name" value="Bifunc_HldE"/>
</dbReference>
<dbReference type="InterPro" id="IPR002173">
    <property type="entry name" value="Carboh/pur_kinase_PfkB_CS"/>
</dbReference>
<dbReference type="InterPro" id="IPR004821">
    <property type="entry name" value="Cyt_trans-like"/>
</dbReference>
<dbReference type="InterPro" id="IPR011611">
    <property type="entry name" value="PfkB_dom"/>
</dbReference>
<dbReference type="InterPro" id="IPR011913">
    <property type="entry name" value="RfaE_dom_I"/>
</dbReference>
<dbReference type="InterPro" id="IPR011914">
    <property type="entry name" value="RfaE_dom_II"/>
</dbReference>
<dbReference type="InterPro" id="IPR029056">
    <property type="entry name" value="Ribokinase-like"/>
</dbReference>
<dbReference type="InterPro" id="IPR014729">
    <property type="entry name" value="Rossmann-like_a/b/a_fold"/>
</dbReference>
<dbReference type="NCBIfam" id="TIGR00125">
    <property type="entry name" value="cyt_tran_rel"/>
    <property type="match status" value="1"/>
</dbReference>
<dbReference type="NCBIfam" id="NF008454">
    <property type="entry name" value="PRK11316.1"/>
    <property type="match status" value="1"/>
</dbReference>
<dbReference type="NCBIfam" id="TIGR02198">
    <property type="entry name" value="rfaE_dom_I"/>
    <property type="match status" value="1"/>
</dbReference>
<dbReference type="NCBIfam" id="TIGR02199">
    <property type="entry name" value="rfaE_dom_II"/>
    <property type="match status" value="1"/>
</dbReference>
<dbReference type="PANTHER" id="PTHR46969">
    <property type="entry name" value="BIFUNCTIONAL PROTEIN HLDE"/>
    <property type="match status" value="1"/>
</dbReference>
<dbReference type="PANTHER" id="PTHR46969:SF1">
    <property type="entry name" value="BIFUNCTIONAL PROTEIN HLDE"/>
    <property type="match status" value="1"/>
</dbReference>
<dbReference type="Pfam" id="PF01467">
    <property type="entry name" value="CTP_transf_like"/>
    <property type="match status" value="1"/>
</dbReference>
<dbReference type="Pfam" id="PF00294">
    <property type="entry name" value="PfkB"/>
    <property type="match status" value="1"/>
</dbReference>
<dbReference type="SUPFAM" id="SSF52374">
    <property type="entry name" value="Nucleotidylyl transferase"/>
    <property type="match status" value="1"/>
</dbReference>
<dbReference type="SUPFAM" id="SSF53613">
    <property type="entry name" value="Ribokinase-like"/>
    <property type="match status" value="1"/>
</dbReference>
<dbReference type="PROSITE" id="PS00583">
    <property type="entry name" value="PFKB_KINASES_1"/>
    <property type="match status" value="1"/>
</dbReference>
<keyword id="KW-0067">ATP-binding</keyword>
<keyword id="KW-0119">Carbohydrate metabolism</keyword>
<keyword id="KW-0418">Kinase</keyword>
<keyword id="KW-0511">Multifunctional enzyme</keyword>
<keyword id="KW-0547">Nucleotide-binding</keyword>
<keyword id="KW-0548">Nucleotidyltransferase</keyword>
<keyword id="KW-1185">Reference proteome</keyword>
<keyword id="KW-0808">Transferase</keyword>
<gene>
    <name evidence="1" type="primary">hldE</name>
    <name type="ordered locus">SARI_04429</name>
</gene>
<organism>
    <name type="scientific">Salmonella arizonae (strain ATCC BAA-731 / CDC346-86 / RSK2980)</name>
    <dbReference type="NCBI Taxonomy" id="41514"/>
    <lineage>
        <taxon>Bacteria</taxon>
        <taxon>Pseudomonadati</taxon>
        <taxon>Pseudomonadota</taxon>
        <taxon>Gammaproteobacteria</taxon>
        <taxon>Enterobacterales</taxon>
        <taxon>Enterobacteriaceae</taxon>
        <taxon>Salmonella</taxon>
    </lineage>
</organism>
<feature type="chain" id="PRO_1000185814" description="Bifunctional protein HldE">
    <location>
        <begin position="1"/>
        <end position="477"/>
    </location>
</feature>
<feature type="region of interest" description="Ribokinase">
    <location>
        <begin position="1"/>
        <end position="318"/>
    </location>
</feature>
<feature type="region of interest" description="Cytidylyltransferase">
    <location>
        <begin position="344"/>
        <end position="477"/>
    </location>
</feature>
<feature type="active site" evidence="1">
    <location>
        <position position="264"/>
    </location>
</feature>
<feature type="binding site" evidence="1">
    <location>
        <begin position="195"/>
        <end position="198"/>
    </location>
    <ligand>
        <name>ATP</name>
        <dbReference type="ChEBI" id="CHEBI:30616"/>
    </ligand>
</feature>
<sequence length="477" mass="51116">MKVNLPAFERAGVMIVGDVMLDRYWYGPTCRISPEAPVPVVKVNTVEERPGGAANVAMNIASLGANARLVGLTGIDDAARALSKTLAEFNVKCDFVSVPTHPTITKLRVLSRNQQLIRLDFEEGFEGVDPEPLHERINQALGSIGALVLSDYAKGALTSVQTMIALARQADVAVLIDPKGTDFERYRGATLLTPNLSEFEAVAGKCKSEDELVERGMKLIANYDLSALLVTRSEQGMTLLQPNKAPLHMPTQAQEVYDVTGAGDTVIGVLAATLAAGNTLEEACYFANAAAGVVVGKLGTSTVSPVELENAVRGRAATGFGVMTEEELKQAVASARKRGEKVVMTNGVFDILHAGHVSYLANARKLGDRLIVAVNSDASTKRLKGESRPVNPLEQRMIVLGALESVDWVVSFEEDTPQRLIAGILPDLLVKGGDYKPEEIAGSEEVWANGGEVMVLNFEDGCSTTNIIKKIQTESEK</sequence>
<evidence type="ECO:0000255" key="1">
    <source>
        <dbReference type="HAMAP-Rule" id="MF_01603"/>
    </source>
</evidence>
<name>HLDE_SALAR</name>
<protein>
    <recommendedName>
        <fullName evidence="1">Bifunctional protein HldE</fullName>
    </recommendedName>
    <domain>
        <recommendedName>
            <fullName evidence="1">D-beta-D-heptose 7-phosphate kinase</fullName>
            <ecNumber evidence="1">2.7.1.167</ecNumber>
        </recommendedName>
        <alternativeName>
            <fullName evidence="1">D-beta-D-heptose 7-phosphotransferase</fullName>
        </alternativeName>
        <alternativeName>
            <fullName evidence="1">D-glycero-beta-D-manno-heptose-7-phosphate kinase</fullName>
        </alternativeName>
    </domain>
    <domain>
        <recommendedName>
            <fullName evidence="1">D-beta-D-heptose 1-phosphate adenylyltransferase</fullName>
            <ecNumber evidence="1">2.7.7.70</ecNumber>
        </recommendedName>
        <alternativeName>
            <fullName evidence="1">D-glycero-beta-D-manno-heptose 1-phosphate adenylyltransferase</fullName>
        </alternativeName>
    </domain>
</protein>